<gene>
    <name evidence="1" type="primary">rpmA</name>
    <name type="ordered locus">RAF_ORF1058</name>
</gene>
<evidence type="ECO:0000255" key="1">
    <source>
        <dbReference type="HAMAP-Rule" id="MF_00539"/>
    </source>
</evidence>
<evidence type="ECO:0000256" key="2">
    <source>
        <dbReference type="SAM" id="MobiDB-lite"/>
    </source>
</evidence>
<evidence type="ECO:0000305" key="3"/>
<protein>
    <recommendedName>
        <fullName evidence="1">Large ribosomal subunit protein bL27</fullName>
    </recommendedName>
    <alternativeName>
        <fullName evidence="3">50S ribosomal protein L27</fullName>
    </alternativeName>
</protein>
<proteinExistence type="inferred from homology"/>
<comment type="similarity">
    <text evidence="1">Belongs to the bacterial ribosomal protein bL27 family.</text>
</comment>
<dbReference type="EMBL" id="CP001612">
    <property type="protein sequence ID" value="ACP53869.1"/>
    <property type="molecule type" value="Genomic_DNA"/>
</dbReference>
<dbReference type="RefSeq" id="WP_012720005.1">
    <property type="nucleotide sequence ID" value="NC_012633.1"/>
</dbReference>
<dbReference type="SMR" id="C3PLM9"/>
<dbReference type="KEGG" id="raf:RAF_ORF1058"/>
<dbReference type="HOGENOM" id="CLU_095424_4_1_5"/>
<dbReference type="Proteomes" id="UP000002305">
    <property type="component" value="Chromosome"/>
</dbReference>
<dbReference type="GO" id="GO:1990904">
    <property type="term" value="C:ribonucleoprotein complex"/>
    <property type="evidence" value="ECO:0007669"/>
    <property type="project" value="UniProtKB-KW"/>
</dbReference>
<dbReference type="GO" id="GO:0005840">
    <property type="term" value="C:ribosome"/>
    <property type="evidence" value="ECO:0007669"/>
    <property type="project" value="UniProtKB-KW"/>
</dbReference>
<dbReference type="GO" id="GO:0003735">
    <property type="term" value="F:structural constituent of ribosome"/>
    <property type="evidence" value="ECO:0007669"/>
    <property type="project" value="InterPro"/>
</dbReference>
<dbReference type="GO" id="GO:0006412">
    <property type="term" value="P:translation"/>
    <property type="evidence" value="ECO:0007669"/>
    <property type="project" value="UniProtKB-UniRule"/>
</dbReference>
<dbReference type="FunFam" id="2.40.50.100:FF:000020">
    <property type="entry name" value="50S ribosomal protein L27"/>
    <property type="match status" value="1"/>
</dbReference>
<dbReference type="Gene3D" id="2.40.50.100">
    <property type="match status" value="1"/>
</dbReference>
<dbReference type="HAMAP" id="MF_00539">
    <property type="entry name" value="Ribosomal_bL27"/>
    <property type="match status" value="1"/>
</dbReference>
<dbReference type="InterPro" id="IPR001684">
    <property type="entry name" value="Ribosomal_bL27"/>
</dbReference>
<dbReference type="InterPro" id="IPR018261">
    <property type="entry name" value="Ribosomal_bL27_CS"/>
</dbReference>
<dbReference type="NCBIfam" id="TIGR00062">
    <property type="entry name" value="L27"/>
    <property type="match status" value="1"/>
</dbReference>
<dbReference type="PANTHER" id="PTHR15893:SF0">
    <property type="entry name" value="LARGE RIBOSOMAL SUBUNIT PROTEIN BL27M"/>
    <property type="match status" value="1"/>
</dbReference>
<dbReference type="PANTHER" id="PTHR15893">
    <property type="entry name" value="RIBOSOMAL PROTEIN L27"/>
    <property type="match status" value="1"/>
</dbReference>
<dbReference type="Pfam" id="PF01016">
    <property type="entry name" value="Ribosomal_L27"/>
    <property type="match status" value="1"/>
</dbReference>
<dbReference type="PRINTS" id="PR00063">
    <property type="entry name" value="RIBOSOMALL27"/>
</dbReference>
<dbReference type="SUPFAM" id="SSF110324">
    <property type="entry name" value="Ribosomal L27 protein-like"/>
    <property type="match status" value="1"/>
</dbReference>
<dbReference type="PROSITE" id="PS00831">
    <property type="entry name" value="RIBOSOMAL_L27"/>
    <property type="match status" value="1"/>
</dbReference>
<sequence length="86" mass="9221">MATKKAGGGSRNGRDSAGRRLGVKKTDGQYVIPGNIIVRQRGTKIHPGTNVGLGKDHTIFALIEGRVEFLTKRNHKIVNVKGIAST</sequence>
<accession>C3PLM9</accession>
<reference key="1">
    <citation type="journal article" date="2009" name="BMC Genomics">
        <title>Analysis of the Rickettsia africae genome reveals that virulence acquisition in Rickettsia species may be explained by genome reduction.</title>
        <authorList>
            <person name="Fournier P.-E."/>
            <person name="El Karkouri K."/>
            <person name="Leroy Q."/>
            <person name="Robert C."/>
            <person name="Giumelli B."/>
            <person name="Renesto P."/>
            <person name="Socolovschi C."/>
            <person name="Parola P."/>
            <person name="Audic S."/>
            <person name="Raoult D."/>
        </authorList>
    </citation>
    <scope>NUCLEOTIDE SEQUENCE [LARGE SCALE GENOMIC DNA]</scope>
    <source>
        <strain>ESF-5</strain>
    </source>
</reference>
<organism>
    <name type="scientific">Rickettsia africae (strain ESF-5)</name>
    <dbReference type="NCBI Taxonomy" id="347255"/>
    <lineage>
        <taxon>Bacteria</taxon>
        <taxon>Pseudomonadati</taxon>
        <taxon>Pseudomonadota</taxon>
        <taxon>Alphaproteobacteria</taxon>
        <taxon>Rickettsiales</taxon>
        <taxon>Rickettsiaceae</taxon>
        <taxon>Rickettsieae</taxon>
        <taxon>Rickettsia</taxon>
        <taxon>spotted fever group</taxon>
    </lineage>
</organism>
<keyword id="KW-0687">Ribonucleoprotein</keyword>
<keyword id="KW-0689">Ribosomal protein</keyword>
<name>RL27_RICAE</name>
<feature type="chain" id="PRO_1000211939" description="Large ribosomal subunit protein bL27">
    <location>
        <begin position="1"/>
        <end position="86"/>
    </location>
</feature>
<feature type="region of interest" description="Disordered" evidence="2">
    <location>
        <begin position="1"/>
        <end position="24"/>
    </location>
</feature>
<feature type="compositionally biased region" description="Gly residues" evidence="2">
    <location>
        <begin position="1"/>
        <end position="11"/>
    </location>
</feature>